<reference key="1">
    <citation type="journal article" date="1998" name="J. Biol. Chem.">
        <title>Molecular cloning, expression, and characterization of novel human SULT1C sulfotransferases that catalyze the sulfonation of N-hydroxy-2-acetylaminofluorene.</title>
        <authorList>
            <person name="Sakakibara Y."/>
            <person name="Yanagisawa K."/>
            <person name="Katafuchi J."/>
            <person name="Ringer D.P."/>
            <person name="Takami Y."/>
            <person name="Nakayama T."/>
            <person name="Suiko M."/>
            <person name="Liu M.-C."/>
        </authorList>
    </citation>
    <scope>NUCLEOTIDE SEQUENCE [MRNA] (ISOFORM 1)</scope>
    <scope>VARIANT GLU-5</scope>
    <scope>TISSUE SPECIFICITY</scope>
    <scope>FUNCTION</scope>
    <scope>CATALYTIC ACTIVITY</scope>
    <source>
        <tissue>Fetal lung</tissue>
    </source>
</reference>
<reference key="2">
    <citation type="journal article" date="2000" name="Genomics">
        <title>Human sulfotransferases SULT1C1 and SULT1C2: cDNA characterization, gene cloning, and chromosomal localization.</title>
        <authorList>
            <person name="Freimuth R.R."/>
            <person name="Raftogianis R.B."/>
            <person name="Wood T.C."/>
            <person name="Moon E."/>
            <person name="Kim U.-J."/>
            <person name="Xu J."/>
            <person name="Siciliano M.J."/>
            <person name="Weinshilboum R.M."/>
        </authorList>
    </citation>
    <scope>NUCLEOTIDE SEQUENCE [GENOMIC DNA]</scope>
</reference>
<reference key="3">
    <citation type="journal article" date="2004" name="Nat. Genet.">
        <title>Complete sequencing and characterization of 21,243 full-length human cDNAs.</title>
        <authorList>
            <person name="Ota T."/>
            <person name="Suzuki Y."/>
            <person name="Nishikawa T."/>
            <person name="Otsuki T."/>
            <person name="Sugiyama T."/>
            <person name="Irie R."/>
            <person name="Wakamatsu A."/>
            <person name="Hayashi K."/>
            <person name="Sato H."/>
            <person name="Nagai K."/>
            <person name="Kimura K."/>
            <person name="Makita H."/>
            <person name="Sekine M."/>
            <person name="Obayashi M."/>
            <person name="Nishi T."/>
            <person name="Shibahara T."/>
            <person name="Tanaka T."/>
            <person name="Ishii S."/>
            <person name="Yamamoto J."/>
            <person name="Saito K."/>
            <person name="Kawai Y."/>
            <person name="Isono Y."/>
            <person name="Nakamura Y."/>
            <person name="Nagahari K."/>
            <person name="Murakami K."/>
            <person name="Yasuda T."/>
            <person name="Iwayanagi T."/>
            <person name="Wagatsuma M."/>
            <person name="Shiratori A."/>
            <person name="Sudo H."/>
            <person name="Hosoiri T."/>
            <person name="Kaku Y."/>
            <person name="Kodaira H."/>
            <person name="Kondo H."/>
            <person name="Sugawara M."/>
            <person name="Takahashi M."/>
            <person name="Kanda K."/>
            <person name="Yokoi T."/>
            <person name="Furuya T."/>
            <person name="Kikkawa E."/>
            <person name="Omura Y."/>
            <person name="Abe K."/>
            <person name="Kamihara K."/>
            <person name="Katsuta N."/>
            <person name="Sato K."/>
            <person name="Tanikawa M."/>
            <person name="Yamazaki M."/>
            <person name="Ninomiya K."/>
            <person name="Ishibashi T."/>
            <person name="Yamashita H."/>
            <person name="Murakawa K."/>
            <person name="Fujimori K."/>
            <person name="Tanai H."/>
            <person name="Kimata M."/>
            <person name="Watanabe M."/>
            <person name="Hiraoka S."/>
            <person name="Chiba Y."/>
            <person name="Ishida S."/>
            <person name="Ono Y."/>
            <person name="Takiguchi S."/>
            <person name="Watanabe S."/>
            <person name="Yosida M."/>
            <person name="Hotuta T."/>
            <person name="Kusano J."/>
            <person name="Kanehori K."/>
            <person name="Takahashi-Fujii A."/>
            <person name="Hara H."/>
            <person name="Tanase T.-O."/>
            <person name="Nomura Y."/>
            <person name="Togiya S."/>
            <person name="Komai F."/>
            <person name="Hara R."/>
            <person name="Takeuchi K."/>
            <person name="Arita M."/>
            <person name="Imose N."/>
            <person name="Musashino K."/>
            <person name="Yuuki H."/>
            <person name="Oshima A."/>
            <person name="Sasaki N."/>
            <person name="Aotsuka S."/>
            <person name="Yoshikawa Y."/>
            <person name="Matsunawa H."/>
            <person name="Ichihara T."/>
            <person name="Shiohata N."/>
            <person name="Sano S."/>
            <person name="Moriya S."/>
            <person name="Momiyama H."/>
            <person name="Satoh N."/>
            <person name="Takami S."/>
            <person name="Terashima Y."/>
            <person name="Suzuki O."/>
            <person name="Nakagawa S."/>
            <person name="Senoh A."/>
            <person name="Mizoguchi H."/>
            <person name="Goto Y."/>
            <person name="Shimizu F."/>
            <person name="Wakebe H."/>
            <person name="Hishigaki H."/>
            <person name="Watanabe T."/>
            <person name="Sugiyama A."/>
            <person name="Takemoto M."/>
            <person name="Kawakami B."/>
            <person name="Yamazaki M."/>
            <person name="Watanabe K."/>
            <person name="Kumagai A."/>
            <person name="Itakura S."/>
            <person name="Fukuzumi Y."/>
            <person name="Fujimori Y."/>
            <person name="Komiyama M."/>
            <person name="Tashiro H."/>
            <person name="Tanigami A."/>
            <person name="Fujiwara T."/>
            <person name="Ono T."/>
            <person name="Yamada K."/>
            <person name="Fujii Y."/>
            <person name="Ozaki K."/>
            <person name="Hirao M."/>
            <person name="Ohmori Y."/>
            <person name="Kawabata A."/>
            <person name="Hikiji T."/>
            <person name="Kobatake N."/>
            <person name="Inagaki H."/>
            <person name="Ikema Y."/>
            <person name="Okamoto S."/>
            <person name="Okitani R."/>
            <person name="Kawakami T."/>
            <person name="Noguchi S."/>
            <person name="Itoh T."/>
            <person name="Shigeta K."/>
            <person name="Senba T."/>
            <person name="Matsumura K."/>
            <person name="Nakajima Y."/>
            <person name="Mizuno T."/>
            <person name="Morinaga M."/>
            <person name="Sasaki M."/>
            <person name="Togashi T."/>
            <person name="Oyama M."/>
            <person name="Hata H."/>
            <person name="Watanabe M."/>
            <person name="Komatsu T."/>
            <person name="Mizushima-Sugano J."/>
            <person name="Satoh T."/>
            <person name="Shirai Y."/>
            <person name="Takahashi Y."/>
            <person name="Nakagawa K."/>
            <person name="Okumura K."/>
            <person name="Nagase T."/>
            <person name="Nomura N."/>
            <person name="Kikuchi H."/>
            <person name="Masuho Y."/>
            <person name="Yamashita R."/>
            <person name="Nakai K."/>
            <person name="Yada T."/>
            <person name="Nakamura Y."/>
            <person name="Ohara O."/>
            <person name="Isogai T."/>
            <person name="Sugano S."/>
        </authorList>
    </citation>
    <scope>NUCLEOTIDE SEQUENCE [LARGE SCALE MRNA] (ISOFORM 2)</scope>
    <source>
        <tissue>Heart</tissue>
    </source>
</reference>
<reference key="4">
    <citation type="submission" date="2006-09" db="EMBL/GenBank/DDBJ databases">
        <authorList>
            <consortium name="NIEHS SNPs program"/>
        </authorList>
    </citation>
    <scope>NUCLEOTIDE SEQUENCE [GENOMIC DNA]</scope>
    <scope>VARIANTS GLU-5 AND MET-68</scope>
</reference>
<reference key="5">
    <citation type="journal article" date="2005" name="Nature">
        <title>Generation and annotation of the DNA sequences of human chromosomes 2 and 4.</title>
        <authorList>
            <person name="Hillier L.W."/>
            <person name="Graves T.A."/>
            <person name="Fulton R.S."/>
            <person name="Fulton L.A."/>
            <person name="Pepin K.H."/>
            <person name="Minx P."/>
            <person name="Wagner-McPherson C."/>
            <person name="Layman D."/>
            <person name="Wylie K."/>
            <person name="Sekhon M."/>
            <person name="Becker M.C."/>
            <person name="Fewell G.A."/>
            <person name="Delehaunty K.D."/>
            <person name="Miner T.L."/>
            <person name="Nash W.E."/>
            <person name="Kremitzki C."/>
            <person name="Oddy L."/>
            <person name="Du H."/>
            <person name="Sun H."/>
            <person name="Bradshaw-Cordum H."/>
            <person name="Ali J."/>
            <person name="Carter J."/>
            <person name="Cordes M."/>
            <person name="Harris A."/>
            <person name="Isak A."/>
            <person name="van Brunt A."/>
            <person name="Nguyen C."/>
            <person name="Du F."/>
            <person name="Courtney L."/>
            <person name="Kalicki J."/>
            <person name="Ozersky P."/>
            <person name="Abbott S."/>
            <person name="Armstrong J."/>
            <person name="Belter E.A."/>
            <person name="Caruso L."/>
            <person name="Cedroni M."/>
            <person name="Cotton M."/>
            <person name="Davidson T."/>
            <person name="Desai A."/>
            <person name="Elliott G."/>
            <person name="Erb T."/>
            <person name="Fronick C."/>
            <person name="Gaige T."/>
            <person name="Haakenson W."/>
            <person name="Haglund K."/>
            <person name="Holmes A."/>
            <person name="Harkins R."/>
            <person name="Kim K."/>
            <person name="Kruchowski S.S."/>
            <person name="Strong C.M."/>
            <person name="Grewal N."/>
            <person name="Goyea E."/>
            <person name="Hou S."/>
            <person name="Levy A."/>
            <person name="Martinka S."/>
            <person name="Mead K."/>
            <person name="McLellan M.D."/>
            <person name="Meyer R."/>
            <person name="Randall-Maher J."/>
            <person name="Tomlinson C."/>
            <person name="Dauphin-Kohlberg S."/>
            <person name="Kozlowicz-Reilly A."/>
            <person name="Shah N."/>
            <person name="Swearengen-Shahid S."/>
            <person name="Snider J."/>
            <person name="Strong J.T."/>
            <person name="Thompson J."/>
            <person name="Yoakum M."/>
            <person name="Leonard S."/>
            <person name="Pearman C."/>
            <person name="Trani L."/>
            <person name="Radionenko M."/>
            <person name="Waligorski J.E."/>
            <person name="Wang C."/>
            <person name="Rock S.M."/>
            <person name="Tin-Wollam A.-M."/>
            <person name="Maupin R."/>
            <person name="Latreille P."/>
            <person name="Wendl M.C."/>
            <person name="Yang S.-P."/>
            <person name="Pohl C."/>
            <person name="Wallis J.W."/>
            <person name="Spieth J."/>
            <person name="Bieri T.A."/>
            <person name="Berkowicz N."/>
            <person name="Nelson J.O."/>
            <person name="Osborne J."/>
            <person name="Ding L."/>
            <person name="Meyer R."/>
            <person name="Sabo A."/>
            <person name="Shotland Y."/>
            <person name="Sinha P."/>
            <person name="Wohldmann P.E."/>
            <person name="Cook L.L."/>
            <person name="Hickenbotham M.T."/>
            <person name="Eldred J."/>
            <person name="Williams D."/>
            <person name="Jones T.A."/>
            <person name="She X."/>
            <person name="Ciccarelli F.D."/>
            <person name="Izaurralde E."/>
            <person name="Taylor J."/>
            <person name="Schmutz J."/>
            <person name="Myers R.M."/>
            <person name="Cox D.R."/>
            <person name="Huang X."/>
            <person name="McPherson J.D."/>
            <person name="Mardis E.R."/>
            <person name="Clifton S.W."/>
            <person name="Warren W.C."/>
            <person name="Chinwalla A.T."/>
            <person name="Eddy S.R."/>
            <person name="Marra M.A."/>
            <person name="Ovcharenko I."/>
            <person name="Furey T.S."/>
            <person name="Miller W."/>
            <person name="Eichler E.E."/>
            <person name="Bork P."/>
            <person name="Suyama M."/>
            <person name="Torrents D."/>
            <person name="Waterston R.H."/>
            <person name="Wilson R.K."/>
        </authorList>
    </citation>
    <scope>NUCLEOTIDE SEQUENCE [LARGE SCALE GENOMIC DNA]</scope>
</reference>
<reference key="6">
    <citation type="submission" date="2005-09" db="EMBL/GenBank/DDBJ databases">
        <authorList>
            <person name="Mural R.J."/>
            <person name="Istrail S."/>
            <person name="Sutton G.G."/>
            <person name="Florea L."/>
            <person name="Halpern A.L."/>
            <person name="Mobarry C.M."/>
            <person name="Lippert R."/>
            <person name="Walenz B."/>
            <person name="Shatkay H."/>
            <person name="Dew I."/>
            <person name="Miller J.R."/>
            <person name="Flanigan M.J."/>
            <person name="Edwards N.J."/>
            <person name="Bolanos R."/>
            <person name="Fasulo D."/>
            <person name="Halldorsson B.V."/>
            <person name="Hannenhalli S."/>
            <person name="Turner R."/>
            <person name="Yooseph S."/>
            <person name="Lu F."/>
            <person name="Nusskern D.R."/>
            <person name="Shue B.C."/>
            <person name="Zheng X.H."/>
            <person name="Zhong F."/>
            <person name="Delcher A.L."/>
            <person name="Huson D.H."/>
            <person name="Kravitz S.A."/>
            <person name="Mouchard L."/>
            <person name="Reinert K."/>
            <person name="Remington K.A."/>
            <person name="Clark A.G."/>
            <person name="Waterman M.S."/>
            <person name="Eichler E.E."/>
            <person name="Adams M.D."/>
            <person name="Hunkapiller M.W."/>
            <person name="Myers E.W."/>
            <person name="Venter J.C."/>
        </authorList>
    </citation>
    <scope>NUCLEOTIDE SEQUENCE [LARGE SCALE GENOMIC DNA]</scope>
</reference>
<reference key="7">
    <citation type="journal article" date="2004" name="Genome Res.">
        <title>The status, quality, and expansion of the NIH full-length cDNA project: the Mammalian Gene Collection (MGC).</title>
        <authorList>
            <consortium name="The MGC Project Team"/>
        </authorList>
    </citation>
    <scope>NUCLEOTIDE SEQUENCE [LARGE SCALE MRNA] (ISOFORM 2)</scope>
</reference>
<reference key="8">
    <citation type="journal article" date="2007" name="PLoS Biol.">
        <title>Structural and chemical profiling of the human cytosolic sulfotransferases.</title>
        <authorList>
            <person name="Allali-Hassani A."/>
            <person name="Pan P.W."/>
            <person name="Dombrovski L."/>
            <person name="Najmanovich R."/>
            <person name="Tempel W."/>
            <person name="Dong A."/>
            <person name="Loppnau P."/>
            <person name="Martin F."/>
            <person name="Thornton J."/>
            <person name="Edwards A.M."/>
            <person name="Bochkarev A."/>
            <person name="Plotnikov A.N."/>
            <person name="Vedadi M."/>
            <person name="Arrowsmith C.H."/>
        </authorList>
    </citation>
    <scope>X-RAY CRYSTALLOGRAPHY (1.80 ANGSTROMS) OF 7-302 IN COMPLEX WITH ADENOSINE-3'-5'-DIPHOSPHATE (PAPS) AND PENTACHLOROPHENOL (PCP)</scope>
    <scope>FUNCTION</scope>
    <scope>CATALYTIC ACTIVITY</scope>
</reference>
<reference key="9">
    <citation type="journal article" date="2016" name="Drug Metab. Pharmacokinet.">
        <title>Human cytosolic sulfotransferase SULT1C4 mediates the sulfation of doxorubicin and epirubicin.</title>
        <authorList>
            <person name="Luo L."/>
            <person name="Zhou C."/>
            <person name="Hui Y."/>
            <person name="Kurogi K."/>
            <person name="Sakakibara Y."/>
            <person name="Suiko M."/>
            <person name="Liu M.C."/>
        </authorList>
    </citation>
    <scope>CATALYTIC ACTIVITY</scope>
    <scope>FUNCTION</scope>
    <scope>BIOPHYSICOCHEMICAL PROPERTIES</scope>
</reference>
<reference key="10">
    <citation type="journal article" date="2017" name="Horm. Mol. Bio. Clin. Investig.">
        <title>Expression, purification and characterization of human cytosolic sulfotransferase (SULT) 1C4.</title>
        <authorList>
            <person name="Guidry A.L."/>
            <person name="Tibbs Z.E."/>
            <person name="Runge-Morris M."/>
            <person name="Falany C.N."/>
        </authorList>
    </citation>
    <scope>FUNCTION</scope>
    <scope>CATALYTIC ACTIVITY</scope>
    <scope>BIOPHYSICOCHEMICAL PROPERTIES</scope>
    <scope>SUBCELLULAR LOCATION</scope>
</reference>
<organism>
    <name type="scientific">Homo sapiens</name>
    <name type="common">Human</name>
    <dbReference type="NCBI Taxonomy" id="9606"/>
    <lineage>
        <taxon>Eukaryota</taxon>
        <taxon>Metazoa</taxon>
        <taxon>Chordata</taxon>
        <taxon>Craniata</taxon>
        <taxon>Vertebrata</taxon>
        <taxon>Euteleostomi</taxon>
        <taxon>Mammalia</taxon>
        <taxon>Eutheria</taxon>
        <taxon>Euarchontoglires</taxon>
        <taxon>Primates</taxon>
        <taxon>Haplorrhini</taxon>
        <taxon>Catarrhini</taxon>
        <taxon>Hominidae</taxon>
        <taxon>Homo</taxon>
    </lineage>
</organism>
<dbReference type="EC" id="2.8.2.1" evidence="2 3 4 5"/>
<dbReference type="EMBL" id="AF055584">
    <property type="protein sequence ID" value="AAC95519.1"/>
    <property type="molecule type" value="mRNA"/>
</dbReference>
<dbReference type="EMBL" id="AF186263">
    <property type="protein sequence ID" value="AAF72810.1"/>
    <property type="molecule type" value="Genomic_DNA"/>
</dbReference>
<dbReference type="EMBL" id="AK297851">
    <property type="protein sequence ID" value="BAG60183.1"/>
    <property type="molecule type" value="mRNA"/>
</dbReference>
<dbReference type="EMBL" id="DQ987914">
    <property type="protein sequence ID" value="ABI75348.1"/>
    <property type="molecule type" value="Genomic_DNA"/>
</dbReference>
<dbReference type="EMBL" id="AC068941">
    <property type="protein sequence ID" value="AAY14742.1"/>
    <property type="molecule type" value="Genomic_DNA"/>
</dbReference>
<dbReference type="EMBL" id="CH471182">
    <property type="protein sequence ID" value="EAW53886.1"/>
    <property type="molecule type" value="Genomic_DNA"/>
</dbReference>
<dbReference type="EMBL" id="BC125043">
    <property type="protein sequence ID" value="AAI25044.1"/>
    <property type="molecule type" value="mRNA"/>
</dbReference>
<dbReference type="CCDS" id="CCDS2077.1">
    <molecule id="O75897-1"/>
</dbReference>
<dbReference type="CCDS" id="CCDS82492.1">
    <molecule id="O75897-2"/>
</dbReference>
<dbReference type="RefSeq" id="NP_001308699.1">
    <molecule id="O75897-2"/>
    <property type="nucleotide sequence ID" value="NM_001321770.2"/>
</dbReference>
<dbReference type="RefSeq" id="NP_006579.2">
    <molecule id="O75897-1"/>
    <property type="nucleotide sequence ID" value="NM_006588.3"/>
</dbReference>
<dbReference type="PDB" id="2AD1">
    <property type="method" value="X-ray"/>
    <property type="resolution" value="2.00 A"/>
    <property type="chains" value="A=7-302"/>
</dbReference>
<dbReference type="PDB" id="2GWH">
    <property type="method" value="X-ray"/>
    <property type="resolution" value="1.80 A"/>
    <property type="chains" value="A/B=7-302"/>
</dbReference>
<dbReference type="PDBsum" id="2AD1"/>
<dbReference type="PDBsum" id="2GWH"/>
<dbReference type="SMR" id="O75897"/>
<dbReference type="BioGRID" id="118082">
    <property type="interactions" value="135"/>
</dbReference>
<dbReference type="FunCoup" id="O75897">
    <property type="interactions" value="350"/>
</dbReference>
<dbReference type="IntAct" id="O75897">
    <property type="interactions" value="104"/>
</dbReference>
<dbReference type="STRING" id="9606.ENSP00000272452"/>
<dbReference type="ChEMBL" id="CHEMBL1743296"/>
<dbReference type="DrugBank" id="DB14635">
    <property type="generic name" value="Curcumin sulfate"/>
</dbReference>
<dbReference type="DrugBank" id="DB12243">
    <property type="generic name" value="Edaravone"/>
</dbReference>
<dbReference type="DrugBank" id="DB12471">
    <property type="generic name" value="Ibrexafungerp"/>
</dbReference>
<dbReference type="DrugBank" id="DB00968">
    <property type="generic name" value="Methyldopa"/>
</dbReference>
<dbReference type="DrugBank" id="DB00960">
    <property type="generic name" value="Pindolol"/>
</dbReference>
<dbReference type="DrugBank" id="DB00867">
    <property type="generic name" value="Ritodrine"/>
</dbReference>
<dbReference type="DrugBank" id="DB00871">
    <property type="generic name" value="Terbutaline"/>
</dbReference>
<dbReference type="iPTMnet" id="O75897"/>
<dbReference type="PhosphoSitePlus" id="O75897"/>
<dbReference type="BioMuta" id="SULT1C4"/>
<dbReference type="jPOST" id="O75897"/>
<dbReference type="MassIVE" id="O75897"/>
<dbReference type="PaxDb" id="9606-ENSP00000272452"/>
<dbReference type="PeptideAtlas" id="O75897"/>
<dbReference type="ProteomicsDB" id="50251">
    <molecule id="O75897-1"/>
</dbReference>
<dbReference type="ProteomicsDB" id="58685"/>
<dbReference type="Antibodypedia" id="33063">
    <property type="antibodies" value="95 antibodies from 23 providers"/>
</dbReference>
<dbReference type="DNASU" id="27233"/>
<dbReference type="Ensembl" id="ENST00000272452.7">
    <molecule id="O75897-1"/>
    <property type="protein sequence ID" value="ENSP00000272452.2"/>
    <property type="gene ID" value="ENSG00000198075.10"/>
</dbReference>
<dbReference type="Ensembl" id="ENST00000409309.3">
    <molecule id="O75897-2"/>
    <property type="protein sequence ID" value="ENSP00000387225.3"/>
    <property type="gene ID" value="ENSG00000198075.10"/>
</dbReference>
<dbReference type="GeneID" id="27233"/>
<dbReference type="KEGG" id="hsa:27233"/>
<dbReference type="MANE-Select" id="ENST00000272452.7">
    <property type="protein sequence ID" value="ENSP00000272452.2"/>
    <property type="RefSeq nucleotide sequence ID" value="NM_006588.4"/>
    <property type="RefSeq protein sequence ID" value="NP_006579.2"/>
</dbReference>
<dbReference type="UCSC" id="uc002tea.2">
    <molecule id="O75897-1"/>
    <property type="organism name" value="human"/>
</dbReference>
<dbReference type="AGR" id="HGNC:11457"/>
<dbReference type="CTD" id="27233"/>
<dbReference type="DisGeNET" id="27233"/>
<dbReference type="GeneCards" id="SULT1C4"/>
<dbReference type="HGNC" id="HGNC:11457">
    <property type="gene designation" value="SULT1C4"/>
</dbReference>
<dbReference type="HPA" id="ENSG00000198075">
    <property type="expression patterns" value="Low tissue specificity"/>
</dbReference>
<dbReference type="MIM" id="608357">
    <property type="type" value="gene"/>
</dbReference>
<dbReference type="neXtProt" id="NX_O75897"/>
<dbReference type="OpenTargets" id="ENSG00000198075"/>
<dbReference type="PharmGKB" id="PA162405070"/>
<dbReference type="VEuPathDB" id="HostDB:ENSG00000198075"/>
<dbReference type="eggNOG" id="KOG1584">
    <property type="taxonomic scope" value="Eukaryota"/>
</dbReference>
<dbReference type="GeneTree" id="ENSGT00940000157101"/>
<dbReference type="HOGENOM" id="CLU_027239_1_2_1"/>
<dbReference type="InParanoid" id="O75897"/>
<dbReference type="OMA" id="ECKNNAK"/>
<dbReference type="OrthoDB" id="205623at2759"/>
<dbReference type="PAN-GO" id="O75897">
    <property type="GO annotations" value="3 GO annotations based on evolutionary models"/>
</dbReference>
<dbReference type="PhylomeDB" id="O75897"/>
<dbReference type="TreeFam" id="TF321745"/>
<dbReference type="BRENDA" id="2.8.2.1">
    <property type="organism ID" value="2681"/>
</dbReference>
<dbReference type="PathwayCommons" id="O75897"/>
<dbReference type="Reactome" id="R-HSA-156584">
    <property type="pathway name" value="Cytosolic sulfonation of small molecules"/>
</dbReference>
<dbReference type="Reactome" id="R-HSA-9753281">
    <property type="pathway name" value="Paracetamol ADME"/>
</dbReference>
<dbReference type="SignaLink" id="O75897"/>
<dbReference type="BioGRID-ORCS" id="27233">
    <property type="hits" value="7 hits in 1140 CRISPR screens"/>
</dbReference>
<dbReference type="EvolutionaryTrace" id="O75897"/>
<dbReference type="GeneWiki" id="SULT1C4"/>
<dbReference type="GenomeRNAi" id="27233"/>
<dbReference type="Pharos" id="O75897">
    <property type="development level" value="Tbio"/>
</dbReference>
<dbReference type="PRO" id="PR:O75897"/>
<dbReference type="Proteomes" id="UP000005640">
    <property type="component" value="Chromosome 2"/>
</dbReference>
<dbReference type="RNAct" id="O75897">
    <property type="molecule type" value="protein"/>
</dbReference>
<dbReference type="Bgee" id="ENSG00000198075">
    <property type="expression patterns" value="Expressed in ventricular zone and 97 other cell types or tissues"/>
</dbReference>
<dbReference type="GO" id="GO:0005737">
    <property type="term" value="C:cytoplasm"/>
    <property type="evidence" value="ECO:0000318"/>
    <property type="project" value="GO_Central"/>
</dbReference>
<dbReference type="GO" id="GO:0005829">
    <property type="term" value="C:cytosol"/>
    <property type="evidence" value="ECO:0000314"/>
    <property type="project" value="HPA"/>
</dbReference>
<dbReference type="GO" id="GO:0004062">
    <property type="term" value="F:aryl sulfotransferase activity"/>
    <property type="evidence" value="ECO:0000314"/>
    <property type="project" value="UniProtKB"/>
</dbReference>
<dbReference type="GO" id="GO:0008146">
    <property type="term" value="F:sulfotransferase activity"/>
    <property type="evidence" value="ECO:0000314"/>
    <property type="project" value="UniProtKB"/>
</dbReference>
<dbReference type="GO" id="GO:0050427">
    <property type="term" value="P:3'-phosphoadenosine 5'-phosphosulfate metabolic process"/>
    <property type="evidence" value="ECO:0000314"/>
    <property type="project" value="UniProtKB"/>
</dbReference>
<dbReference type="GO" id="GO:0044598">
    <property type="term" value="P:doxorubicin metabolic process"/>
    <property type="evidence" value="ECO:0000314"/>
    <property type="project" value="UniProtKB"/>
</dbReference>
<dbReference type="GO" id="GO:0006068">
    <property type="term" value="P:ethanol catabolic process"/>
    <property type="evidence" value="ECO:0000314"/>
    <property type="project" value="CAFA"/>
</dbReference>
<dbReference type="GO" id="GO:0009812">
    <property type="term" value="P:flavonoid metabolic process"/>
    <property type="evidence" value="ECO:0000314"/>
    <property type="project" value="UniProtKB"/>
</dbReference>
<dbReference type="GO" id="GO:0051923">
    <property type="term" value="P:sulfation"/>
    <property type="evidence" value="ECO:0000314"/>
    <property type="project" value="BHF-UCL"/>
</dbReference>
<dbReference type="GO" id="GO:0006805">
    <property type="term" value="P:xenobiotic metabolic process"/>
    <property type="evidence" value="ECO:0000314"/>
    <property type="project" value="UniProtKB"/>
</dbReference>
<dbReference type="FunFam" id="3.40.50.300:FF:000433">
    <property type="entry name" value="Estrogen sulfotransferase"/>
    <property type="match status" value="1"/>
</dbReference>
<dbReference type="Gene3D" id="3.40.50.300">
    <property type="entry name" value="P-loop containing nucleotide triphosphate hydrolases"/>
    <property type="match status" value="1"/>
</dbReference>
<dbReference type="InterPro" id="IPR027417">
    <property type="entry name" value="P-loop_NTPase"/>
</dbReference>
<dbReference type="InterPro" id="IPR000863">
    <property type="entry name" value="Sulfotransferase_dom"/>
</dbReference>
<dbReference type="PANTHER" id="PTHR11783">
    <property type="entry name" value="SULFOTRANSFERASE SULT"/>
    <property type="match status" value="1"/>
</dbReference>
<dbReference type="Pfam" id="PF00685">
    <property type="entry name" value="Sulfotransfer_1"/>
    <property type="match status" value="1"/>
</dbReference>
<dbReference type="SUPFAM" id="SSF52540">
    <property type="entry name" value="P-loop containing nucleoside triphosphate hydrolases"/>
    <property type="match status" value="1"/>
</dbReference>
<feature type="chain" id="PRO_0000085137" description="Sulfotransferase 1C4">
    <location>
        <begin position="1"/>
        <end position="302"/>
    </location>
</feature>
<feature type="active site" description="Proton acceptor" evidence="1">
    <location>
        <position position="115"/>
    </location>
</feature>
<feature type="binding site" evidence="2">
    <location>
        <begin position="55"/>
        <end position="60"/>
    </location>
    <ligand>
        <name>3'-phosphoadenylyl sulfate</name>
        <dbReference type="ChEBI" id="CHEBI:58339"/>
    </ligand>
</feature>
<feature type="binding site" evidence="1">
    <location>
        <begin position="113"/>
        <end position="115"/>
    </location>
    <ligand>
        <name>substrate</name>
    </ligand>
</feature>
<feature type="binding site" evidence="2">
    <location>
        <position position="137"/>
    </location>
    <ligand>
        <name>3'-phosphoadenylyl sulfate</name>
        <dbReference type="ChEBI" id="CHEBI:58339"/>
    </ligand>
</feature>
<feature type="binding site" evidence="2">
    <location>
        <position position="145"/>
    </location>
    <ligand>
        <name>3'-phosphoadenylyl sulfate</name>
        <dbReference type="ChEBI" id="CHEBI:58339"/>
    </ligand>
</feature>
<feature type="binding site" evidence="2">
    <location>
        <position position="200"/>
    </location>
    <ligand>
        <name>3'-phosphoadenylyl sulfate</name>
        <dbReference type="ChEBI" id="CHEBI:58339"/>
    </ligand>
</feature>
<feature type="binding site" evidence="2">
    <location>
        <begin position="234"/>
        <end position="239"/>
    </location>
    <ligand>
        <name>3'-phosphoadenylyl sulfate</name>
        <dbReference type="ChEBI" id="CHEBI:58339"/>
    </ligand>
</feature>
<feature type="binding site" evidence="2">
    <location>
        <begin position="262"/>
        <end position="266"/>
    </location>
    <ligand>
        <name>3'-phosphoadenylyl sulfate</name>
        <dbReference type="ChEBI" id="CHEBI:58339"/>
    </ligand>
</feature>
<feature type="splice variant" id="VSP_056255" description="In isoform 2." evidence="7 8">
    <location>
        <begin position="99"/>
        <end position="173"/>
    </location>
</feature>
<feature type="sequence variant" id="VAR_025404" description="In dbSNP:rs1402467." evidence="5 6">
    <original>D</original>
    <variation>E</variation>
    <location>
        <position position="5"/>
    </location>
</feature>
<feature type="sequence variant" id="VAR_061889" description="In dbSNP:rs41322445." evidence="6">
    <original>I</original>
    <variation>M</variation>
    <location>
        <position position="68"/>
    </location>
</feature>
<feature type="strand" evidence="13">
    <location>
        <begin position="19"/>
        <end position="22"/>
    </location>
</feature>
<feature type="strand" evidence="13">
    <location>
        <begin position="25"/>
        <end position="28"/>
    </location>
</feature>
<feature type="helix" evidence="13">
    <location>
        <begin position="29"/>
        <end position="33"/>
    </location>
</feature>
<feature type="helix" evidence="13">
    <location>
        <begin position="35"/>
        <end position="39"/>
    </location>
</feature>
<feature type="strand" evidence="13">
    <location>
        <begin position="48"/>
        <end position="53"/>
    </location>
</feature>
<feature type="helix" evidence="13">
    <location>
        <begin position="58"/>
        <end position="69"/>
    </location>
</feature>
<feature type="helix" evidence="13">
    <location>
        <begin position="74"/>
        <end position="77"/>
    </location>
</feature>
<feature type="helix" evidence="13">
    <location>
        <begin position="82"/>
        <end position="85"/>
    </location>
</feature>
<feature type="turn" evidence="13">
    <location>
        <begin position="94"/>
        <end position="96"/>
    </location>
</feature>
<feature type="helix" evidence="13">
    <location>
        <begin position="99"/>
        <end position="105"/>
    </location>
</feature>
<feature type="strand" evidence="13">
    <location>
        <begin position="111"/>
        <end position="114"/>
    </location>
</feature>
<feature type="helix" evidence="13">
    <location>
        <begin position="118"/>
        <end position="120"/>
    </location>
</feature>
<feature type="helix" evidence="13">
    <location>
        <begin position="124"/>
        <end position="127"/>
    </location>
</feature>
<feature type="strand" evidence="13">
    <location>
        <begin position="131"/>
        <end position="136"/>
    </location>
</feature>
<feature type="helix" evidence="13">
    <location>
        <begin position="139"/>
        <end position="152"/>
    </location>
</feature>
<feature type="helix" evidence="13">
    <location>
        <begin position="162"/>
        <end position="170"/>
    </location>
</feature>
<feature type="helix" evidence="13">
    <location>
        <begin position="179"/>
        <end position="189"/>
    </location>
</feature>
<feature type="strand" evidence="13">
    <location>
        <begin position="192"/>
        <end position="199"/>
    </location>
</feature>
<feature type="helix" evidence="13">
    <location>
        <begin position="200"/>
        <end position="205"/>
    </location>
</feature>
<feature type="helix" evidence="13">
    <location>
        <begin position="207"/>
        <end position="218"/>
    </location>
</feature>
<feature type="helix" evidence="13">
    <location>
        <begin position="224"/>
        <end position="233"/>
    </location>
</feature>
<feature type="helix" evidence="13">
    <location>
        <begin position="236"/>
        <end position="240"/>
    </location>
</feature>
<feature type="turn" evidence="13">
    <location>
        <begin position="243"/>
        <end position="245"/>
    </location>
</feature>
<feature type="turn" evidence="13">
    <location>
        <begin position="252"/>
        <end position="254"/>
    </location>
</feature>
<feature type="turn" evidence="13">
    <location>
        <begin position="257"/>
        <end position="259"/>
    </location>
</feature>
<feature type="helix" evidence="13">
    <location>
        <begin position="270"/>
        <end position="273"/>
    </location>
</feature>
<feature type="helix" evidence="13">
    <location>
        <begin position="277"/>
        <end position="290"/>
    </location>
</feature>
<feature type="helix" evidence="13">
    <location>
        <begin position="295"/>
        <end position="299"/>
    </location>
</feature>
<protein>
    <recommendedName>
        <fullName>Sulfotransferase 1C4</fullName>
        <shortName>ST1C4</shortName>
        <ecNumber evidence="2 3 4 5">2.8.2.1</ecNumber>
    </recommendedName>
    <alternativeName>
        <fullName evidence="9">Sulfotransferase 1C2</fullName>
        <shortName>SULT1C#2</shortName>
    </alternativeName>
</protein>
<name>ST1C4_HUMAN</name>
<sequence length="302" mass="35520">MALHDMEDFTFDGTKRLSVNYVKGILQPTDTCDIWDKIWNFQAKPDDLLISTYPKAGTTWTQEIVELIQNEGDVEKSKRAPTHQRFPFLEMKIPSLGSGLEQAHAMPSPRILKTHLPFHLLPPSLLEKNCKIIYVARNPKDNMVSYYHFQRMNKALPAPGTWEEYFETFLAGKVCWGSWHEHVKGWWEAKDKHRILYLFYEDMKKNPKHEIQKLAEFIGKKLDDKVLDKIVHYTSFDVMKQNPMANYSSIPAEIMDHSISPFMRKGAVGDWKKHFTVAQNERFDEDYKKKMTDTRLTFHFQF</sequence>
<comment type="function">
    <text evidence="2 3 4 5">Sulfotransferase that utilizes 3'-phospho-5'-adenylyl sulfate (PAPS) as sulfonate donor to catalyze the sulfate conjugation of phenolic compounds. Can also sulfonate estrogenic compounds, however, the dietary flavonoids (phytoestrogen) and environmental estrogens, like bisphenol A are better substrates than 17beta-estradiol (E2) (PubMed:17425406, PubMed:26948952, PubMed:28222028, PubMed:9852044). Mediates the sulfation of doxorubicin and its analog epirubicin, two antitumor anthracyclines (PubMed:26948952).</text>
</comment>
<comment type="catalytic activity">
    <reaction evidence="2 3 4 5">
        <text>a phenol + 3'-phosphoadenylyl sulfate = an aryl sulfate + adenosine 3',5'-bisphosphate + H(+)</text>
        <dbReference type="Rhea" id="RHEA:12164"/>
        <dbReference type="ChEBI" id="CHEBI:15378"/>
        <dbReference type="ChEBI" id="CHEBI:33853"/>
        <dbReference type="ChEBI" id="CHEBI:58339"/>
        <dbReference type="ChEBI" id="CHEBI:58343"/>
        <dbReference type="ChEBI" id="CHEBI:140317"/>
        <dbReference type="EC" id="2.8.2.1"/>
    </reaction>
    <physiologicalReaction direction="left-to-right" evidence="11">
        <dbReference type="Rhea" id="RHEA:12165"/>
    </physiologicalReaction>
</comment>
<comment type="catalytic activity">
    <reaction evidence="4">
        <text>17beta-estradiol + 3'-phosphoadenylyl sulfate = 17beta-estradiol 3-sulfate + adenosine 3',5'-bisphosphate + H(+)</text>
        <dbReference type="Rhea" id="RHEA:52372"/>
        <dbReference type="ChEBI" id="CHEBI:15378"/>
        <dbReference type="ChEBI" id="CHEBI:16469"/>
        <dbReference type="ChEBI" id="CHEBI:58339"/>
        <dbReference type="ChEBI" id="CHEBI:58343"/>
        <dbReference type="ChEBI" id="CHEBI:136582"/>
    </reaction>
    <physiologicalReaction direction="left-to-right" evidence="11">
        <dbReference type="Rhea" id="RHEA:52373"/>
    </physiologicalReaction>
</comment>
<comment type="catalytic activity">
    <reaction evidence="4">
        <text>bisphenol A + 3'-phosphoadenylyl sulfate = bisphenyl A sulfate + adenosine 3',5'-bisphosphate + H(+)</text>
        <dbReference type="Rhea" id="RHEA:66580"/>
        <dbReference type="ChEBI" id="CHEBI:15378"/>
        <dbReference type="ChEBI" id="CHEBI:33216"/>
        <dbReference type="ChEBI" id="CHEBI:58339"/>
        <dbReference type="ChEBI" id="CHEBI:58343"/>
        <dbReference type="ChEBI" id="CHEBI:167171"/>
    </reaction>
    <physiologicalReaction direction="left-to-right" evidence="11">
        <dbReference type="Rhea" id="RHEA:66581"/>
    </physiologicalReaction>
</comment>
<comment type="biophysicochemical properties">
    <kinetics>
        <KM evidence="4">7 uM for PAPS</KM>
        <KM evidence="4">36.2 uM for 17beta-estradiol (E2)</KM>
        <KM evidence="4">3.3 uM for genistein</KM>
        <KM evidence="4">10.5 uM for daidzein</KM>
        <KM evidence="4">0.9 uM for apigenin</KM>
        <KM evidence="4">0.97 uM for chrysin</KM>
        <KM evidence="4">32.8 uM for bisphenol A</KM>
        <KM evidence="4">1.1 uM for 1-naphthol</KM>
        <Vmax evidence="3">5.04 nmol/min/ng enzyme with doxorubicin as substrate</Vmax>
        <Vmax evidence="3">1.85 nmol/min/ng enzyme with epirubicin as substrate</Vmax>
    </kinetics>
    <phDependence>
        <text evidence="4">Optimum pH is 7.4.</text>
    </phDependence>
</comment>
<comment type="subcellular location">
    <subcellularLocation>
        <location evidence="4">Cytoplasm</location>
        <location evidence="4">Cytosol</location>
    </subcellularLocation>
</comment>
<comment type="alternative products">
    <event type="alternative splicing"/>
    <isoform>
        <id>O75897-1</id>
        <name>1</name>
        <sequence type="displayed"/>
    </isoform>
    <isoform>
        <id>O75897-2</id>
        <name>2</name>
        <sequence type="described" ref="VSP_056255"/>
    </isoform>
</comment>
<comment type="tissue specificity">
    <text evidence="5">Expressed at high levels in fetal lung and kidney and at low levels in fetal heart, adult kidney, ovary and spinal cord.</text>
</comment>
<comment type="similarity">
    <text evidence="10">Belongs to the sulfotransferase 1 family.</text>
</comment>
<gene>
    <name evidence="12" type="primary">SULT1C4</name>
    <name evidence="9" type="synonym">SULT1C2</name>
</gene>
<proteinExistence type="evidence at protein level"/>
<accession>O75897</accession>
<accession>Q069I8</accession>
<accession>Q08AS5</accession>
<accession>Q53S63</accession>
<evidence type="ECO:0000250" key="1"/>
<evidence type="ECO:0000269" key="2">
    <source>
    </source>
</evidence>
<evidence type="ECO:0000269" key="3">
    <source>
    </source>
</evidence>
<evidence type="ECO:0000269" key="4">
    <source>
    </source>
</evidence>
<evidence type="ECO:0000269" key="5">
    <source>
    </source>
</evidence>
<evidence type="ECO:0000269" key="6">
    <source ref="4"/>
</evidence>
<evidence type="ECO:0000303" key="7">
    <source>
    </source>
</evidence>
<evidence type="ECO:0000303" key="8">
    <source>
    </source>
</evidence>
<evidence type="ECO:0000303" key="9">
    <source>
    </source>
</evidence>
<evidence type="ECO:0000305" key="10"/>
<evidence type="ECO:0000305" key="11">
    <source>
    </source>
</evidence>
<evidence type="ECO:0000312" key="12">
    <source>
        <dbReference type="HGNC" id="HGNC:11457"/>
    </source>
</evidence>
<evidence type="ECO:0007829" key="13">
    <source>
        <dbReference type="PDB" id="2GWH"/>
    </source>
</evidence>
<keyword id="KW-0002">3D-structure</keyword>
<keyword id="KW-0025">Alternative splicing</keyword>
<keyword id="KW-0963">Cytoplasm</keyword>
<keyword id="KW-1267">Proteomics identification</keyword>
<keyword id="KW-1185">Reference proteome</keyword>
<keyword id="KW-0808">Transferase</keyword>